<evidence type="ECO:0000255" key="1">
    <source>
        <dbReference type="HAMAP-Rule" id="MF_00178"/>
    </source>
</evidence>
<proteinExistence type="inferred from homology"/>
<gene>
    <name evidence="1" type="primary">ribH</name>
    <name type="ordered locus">M1425_1703</name>
</gene>
<protein>
    <recommendedName>
        <fullName evidence="1">6,7-dimethyl-8-ribityllumazine synthase</fullName>
        <shortName evidence="1">DMRL synthase</shortName>
        <shortName evidence="1">LS</shortName>
        <shortName evidence="1">Lumazine synthase</shortName>
        <ecNumber evidence="1">2.5.1.78</ecNumber>
    </recommendedName>
</protein>
<keyword id="KW-0686">Riboflavin biosynthesis</keyword>
<keyword id="KW-0808">Transferase</keyword>
<organism>
    <name type="scientific">Saccharolobus islandicus (strain M.14.25 / Kamchatka #1)</name>
    <name type="common">Sulfolobus islandicus</name>
    <dbReference type="NCBI Taxonomy" id="427317"/>
    <lineage>
        <taxon>Archaea</taxon>
        <taxon>Thermoproteota</taxon>
        <taxon>Thermoprotei</taxon>
        <taxon>Sulfolobales</taxon>
        <taxon>Sulfolobaceae</taxon>
        <taxon>Saccharolobus</taxon>
    </lineage>
</organism>
<dbReference type="EC" id="2.5.1.78" evidence="1"/>
<dbReference type="EMBL" id="CP001400">
    <property type="protein sequence ID" value="ACP38452.1"/>
    <property type="molecule type" value="Genomic_DNA"/>
</dbReference>
<dbReference type="RefSeq" id="WP_012711683.1">
    <property type="nucleotide sequence ID" value="NC_012588.1"/>
</dbReference>
<dbReference type="SMR" id="C3MX02"/>
<dbReference type="GeneID" id="84062057"/>
<dbReference type="KEGG" id="sia:M1425_1703"/>
<dbReference type="HOGENOM" id="CLU_089358_3_1_2"/>
<dbReference type="UniPathway" id="UPA00275">
    <property type="reaction ID" value="UER00404"/>
</dbReference>
<dbReference type="Proteomes" id="UP000001350">
    <property type="component" value="Chromosome"/>
</dbReference>
<dbReference type="GO" id="GO:0009349">
    <property type="term" value="C:riboflavin synthase complex"/>
    <property type="evidence" value="ECO:0007669"/>
    <property type="project" value="InterPro"/>
</dbReference>
<dbReference type="GO" id="GO:0000906">
    <property type="term" value="F:6,7-dimethyl-8-ribityllumazine synthase activity"/>
    <property type="evidence" value="ECO:0007669"/>
    <property type="project" value="UniProtKB-UniRule"/>
</dbReference>
<dbReference type="GO" id="GO:0009231">
    <property type="term" value="P:riboflavin biosynthetic process"/>
    <property type="evidence" value="ECO:0007669"/>
    <property type="project" value="UniProtKB-UniRule"/>
</dbReference>
<dbReference type="CDD" id="cd09211">
    <property type="entry name" value="Lumazine_synthase_archaeal"/>
    <property type="match status" value="1"/>
</dbReference>
<dbReference type="FunFam" id="3.40.50.960:FF:000003">
    <property type="entry name" value="6,7-dimethyl-8-ribityllumazine synthase"/>
    <property type="match status" value="1"/>
</dbReference>
<dbReference type="Gene3D" id="3.40.50.960">
    <property type="entry name" value="Lumazine/riboflavin synthase"/>
    <property type="match status" value="1"/>
</dbReference>
<dbReference type="HAMAP" id="MF_00178">
    <property type="entry name" value="Lumazine_synth"/>
    <property type="match status" value="1"/>
</dbReference>
<dbReference type="InterPro" id="IPR034964">
    <property type="entry name" value="LS"/>
</dbReference>
<dbReference type="InterPro" id="IPR002180">
    <property type="entry name" value="LS/RS"/>
</dbReference>
<dbReference type="InterPro" id="IPR036467">
    <property type="entry name" value="LS/RS_sf"/>
</dbReference>
<dbReference type="NCBIfam" id="TIGR00114">
    <property type="entry name" value="lumazine-synth"/>
    <property type="match status" value="1"/>
</dbReference>
<dbReference type="PANTHER" id="PTHR21058:SF0">
    <property type="entry name" value="6,7-DIMETHYL-8-RIBITYLLUMAZINE SYNTHASE"/>
    <property type="match status" value="1"/>
</dbReference>
<dbReference type="PANTHER" id="PTHR21058">
    <property type="entry name" value="6,7-DIMETHYL-8-RIBITYLLUMAZINE SYNTHASE DMRL SYNTHASE LUMAZINE SYNTHASE"/>
    <property type="match status" value="1"/>
</dbReference>
<dbReference type="Pfam" id="PF00885">
    <property type="entry name" value="DMRL_synthase"/>
    <property type="match status" value="1"/>
</dbReference>
<dbReference type="SUPFAM" id="SSF52121">
    <property type="entry name" value="Lumazine synthase"/>
    <property type="match status" value="1"/>
</dbReference>
<sequence length="154" mass="17091">MQGKSIRLGIVVAEFNYDITQLMLQKALSHAKFLNAEVKVVIKVPGTFDMPLAIKKLLEKDFIDAVVTLGAVIKGETKHDEIVASQTARKIVDLSTEFNKPVTLGIIGHGATHEQAVERIEEYATRAVEAAIKLVQRTRKIDELKEVKETVIID</sequence>
<feature type="chain" id="PRO_1000203803" description="6,7-dimethyl-8-ribityllumazine synthase">
    <location>
        <begin position="1"/>
        <end position="154"/>
    </location>
</feature>
<feature type="active site" description="Proton donor" evidence="1">
    <location>
        <position position="79"/>
    </location>
</feature>
<feature type="binding site" evidence="1">
    <location>
        <position position="15"/>
    </location>
    <ligand>
        <name>5-amino-6-(D-ribitylamino)uracil</name>
        <dbReference type="ChEBI" id="CHEBI:15934"/>
    </ligand>
</feature>
<feature type="binding site" evidence="1">
    <location>
        <begin position="47"/>
        <end position="49"/>
    </location>
    <ligand>
        <name>5-amino-6-(D-ribitylamino)uracil</name>
        <dbReference type="ChEBI" id="CHEBI:15934"/>
    </ligand>
</feature>
<feature type="binding site" evidence="1">
    <location>
        <begin position="71"/>
        <end position="73"/>
    </location>
    <ligand>
        <name>5-amino-6-(D-ribitylamino)uracil</name>
        <dbReference type="ChEBI" id="CHEBI:15934"/>
    </ligand>
</feature>
<feature type="binding site" evidence="1">
    <location>
        <begin position="76"/>
        <end position="77"/>
    </location>
    <ligand>
        <name>(2S)-2-hydroxy-3-oxobutyl phosphate</name>
        <dbReference type="ChEBI" id="CHEBI:58830"/>
    </ligand>
</feature>
<feature type="binding site" evidence="1">
    <location>
        <position position="104"/>
    </location>
    <ligand>
        <name>5-amino-6-(D-ribitylamino)uracil</name>
        <dbReference type="ChEBI" id="CHEBI:15934"/>
    </ligand>
</feature>
<feature type="binding site" evidence="1">
    <location>
        <position position="119"/>
    </location>
    <ligand>
        <name>(2S)-2-hydroxy-3-oxobutyl phosphate</name>
        <dbReference type="ChEBI" id="CHEBI:58830"/>
    </ligand>
</feature>
<comment type="function">
    <text evidence="1">Catalyzes the formation of 6,7-dimethyl-8-ribityllumazine by condensation of 5-amino-6-(D-ribitylamino)uracil with 3,4-dihydroxy-2-butanone 4-phosphate. This is the penultimate step in the biosynthesis of riboflavin.</text>
</comment>
<comment type="catalytic activity">
    <reaction evidence="1">
        <text>(2S)-2-hydroxy-3-oxobutyl phosphate + 5-amino-6-(D-ribitylamino)uracil = 6,7-dimethyl-8-(1-D-ribityl)lumazine + phosphate + 2 H2O + H(+)</text>
        <dbReference type="Rhea" id="RHEA:26152"/>
        <dbReference type="ChEBI" id="CHEBI:15377"/>
        <dbReference type="ChEBI" id="CHEBI:15378"/>
        <dbReference type="ChEBI" id="CHEBI:15934"/>
        <dbReference type="ChEBI" id="CHEBI:43474"/>
        <dbReference type="ChEBI" id="CHEBI:58201"/>
        <dbReference type="ChEBI" id="CHEBI:58830"/>
        <dbReference type="EC" id="2.5.1.78"/>
    </reaction>
</comment>
<comment type="pathway">
    <text evidence="1">Cofactor biosynthesis; riboflavin biosynthesis; riboflavin from 2-hydroxy-3-oxobutyl phosphate and 5-amino-6-(D-ribitylamino)uracil: step 1/2.</text>
</comment>
<comment type="similarity">
    <text evidence="1">Belongs to the DMRL synthase family.</text>
</comment>
<name>RISB_SACI4</name>
<accession>C3MX02</accession>
<reference key="1">
    <citation type="journal article" date="2009" name="Proc. Natl. Acad. Sci. U.S.A.">
        <title>Biogeography of the Sulfolobus islandicus pan-genome.</title>
        <authorList>
            <person name="Reno M.L."/>
            <person name="Held N.L."/>
            <person name="Fields C.J."/>
            <person name="Burke P.V."/>
            <person name="Whitaker R.J."/>
        </authorList>
    </citation>
    <scope>NUCLEOTIDE SEQUENCE [LARGE SCALE GENOMIC DNA]</scope>
    <source>
        <strain>M.14.25 / Kamchatka #1</strain>
    </source>
</reference>